<sequence>MTEFWLISAPGEKTCQQTWEKLHAATTKNNNLAVSSKFNIPDLKVGTLDVLVGLSDELAKLDAFVEGVVKKVAQYMADVLEDSKDKVQENLLASGVDLVTYITRFQWDMAKYPIKQSLKNISEIIAKGVTQIDNDLKSRASAYNNLKGNLQNLERKNAGSLLTRSLAEIVKKDDFVLDSEYLVTLLVVVPKLNHNDWIKQYETLAEMVVPRSSNVLSEDQDSYLCNVTLFRKAVDDFRHKARENKFIVRDFQYNEEEMKADKEEMTRLSTDKKKQFGPLVRWLKVNFSEAFIAWIHIKALRVFVESVLRYGLPVNFQAMLLQPNKKSVKKLREVLHELYKHLDSSAAAIIDAPMDIPGLNLSQQEYYPYVYYKIDCNLLEFK</sequence>
<feature type="initiator methionine" description="Removed" evidence="2">
    <location>
        <position position="1"/>
    </location>
</feature>
<feature type="chain" id="PRO_0000209349" description="V-type proton ATPase subunit C 1">
    <location>
        <begin position="2"/>
        <end position="382"/>
    </location>
</feature>
<feature type="modified residue" description="N-acetylthreonine" evidence="2">
    <location>
        <position position="2"/>
    </location>
</feature>
<feature type="sequence conflict" description="In Ref. 2; AAC83084." evidence="6" ref="2">
    <original>R</original>
    <variation>E</variation>
    <location>
        <position position="267"/>
    </location>
</feature>
<comment type="function">
    <text evidence="1 2 3">Subunit of the V1 complex of vacuolar(H+)-ATPase (V-ATPase), a multisubunit enzyme composed of a peripheral complex (V1) that hydrolyzes ATP and a membrane integral complex (V0) that translocates protons (By similarity). V-ATPase is responsible for acidifying and maintaining the pH of intracellular compartments and in some cell types, is targeted to the plasma membrane, where it is responsible for acidifying the extracellular environment (By similarity). Subunit C is necessary for the assembly of the catalytic sector of the enzyme and is likely to have a specific function in its catalytic activity (By similarity).</text>
</comment>
<comment type="subunit">
    <text evidence="2">V-ATPase is a heteromultimeric enzyme made up of two complexes: the ATP-hydrolytic V1 complex and the proton translocation V0 complex (By similarity). The V1 complex consists of three catalytic AB heterodimers that form a heterohexamer, three peripheral stalks each consisting of EG heterodimers, one central rotor including subunits D and F, and the regulatory subunits C and H (By similarity). The proton translocation complex V0 consists of the proton transport subunit a, a ring of proteolipid subunits c9c'', rotary subunit d, subunits e and f, and the accessory subunits ATP6AP1/Ac45 and ATP6AP2/PRR (By similarity).</text>
</comment>
<comment type="subcellular location">
    <subcellularLocation>
        <location evidence="4">Cytoplasmic vesicle</location>
        <location evidence="4">Secretory vesicle</location>
        <location evidence="4">Synaptic vesicle membrane</location>
        <topology evidence="6">Peripheral membrane protein</topology>
    </subcellularLocation>
    <subcellularLocation>
        <location evidence="4">Cytoplasmic vesicle</location>
        <location evidence="4">Clathrin-coated vesicle membrane</location>
        <topology evidence="6">Peripheral membrane protein</topology>
    </subcellularLocation>
</comment>
<comment type="tissue specificity">
    <text evidence="5">Ubiquitous. Abundant in brain, liver, kidney and testis.</text>
</comment>
<comment type="similarity">
    <text evidence="6">Belongs to the V-ATPase C subunit family.</text>
</comment>
<reference key="1">
    <citation type="journal article" date="2003" name="Gene">
        <title>Diversity of mouse proton-translocating ATPase: presence of multiple isoforms of the C, d and G subunits.</title>
        <authorList>
            <person name="Sun-Wada G.-H."/>
            <person name="Yoshimizu T."/>
            <person name="Imai-Senga Y."/>
            <person name="Wada Y."/>
            <person name="Futai M."/>
        </authorList>
    </citation>
    <scope>NUCLEOTIDE SEQUENCE [MRNA]</scope>
    <scope>TISSUE SPECIFICITY</scope>
</reference>
<reference key="2">
    <citation type="submission" date="1994-08" db="EMBL/GenBank/DDBJ databases">
        <title>cDNA sequences for mouse vacuolar ATPase subunits.</title>
        <authorList>
            <person name="Howell M.L."/>
            <person name="Dean G.E."/>
        </authorList>
    </citation>
    <scope>NUCLEOTIDE SEQUENCE [MRNA]</scope>
</reference>
<reference key="3">
    <citation type="journal article" date="2005" name="Science">
        <title>The transcriptional landscape of the mammalian genome.</title>
        <authorList>
            <person name="Carninci P."/>
            <person name="Kasukawa T."/>
            <person name="Katayama S."/>
            <person name="Gough J."/>
            <person name="Frith M.C."/>
            <person name="Maeda N."/>
            <person name="Oyama R."/>
            <person name="Ravasi T."/>
            <person name="Lenhard B."/>
            <person name="Wells C."/>
            <person name="Kodzius R."/>
            <person name="Shimokawa K."/>
            <person name="Bajic V.B."/>
            <person name="Brenner S.E."/>
            <person name="Batalov S."/>
            <person name="Forrest A.R."/>
            <person name="Zavolan M."/>
            <person name="Davis M.J."/>
            <person name="Wilming L.G."/>
            <person name="Aidinis V."/>
            <person name="Allen J.E."/>
            <person name="Ambesi-Impiombato A."/>
            <person name="Apweiler R."/>
            <person name="Aturaliya R.N."/>
            <person name="Bailey T.L."/>
            <person name="Bansal M."/>
            <person name="Baxter L."/>
            <person name="Beisel K.W."/>
            <person name="Bersano T."/>
            <person name="Bono H."/>
            <person name="Chalk A.M."/>
            <person name="Chiu K.P."/>
            <person name="Choudhary V."/>
            <person name="Christoffels A."/>
            <person name="Clutterbuck D.R."/>
            <person name="Crowe M.L."/>
            <person name="Dalla E."/>
            <person name="Dalrymple B.P."/>
            <person name="de Bono B."/>
            <person name="Della Gatta G."/>
            <person name="di Bernardo D."/>
            <person name="Down T."/>
            <person name="Engstrom P."/>
            <person name="Fagiolini M."/>
            <person name="Faulkner G."/>
            <person name="Fletcher C.F."/>
            <person name="Fukushima T."/>
            <person name="Furuno M."/>
            <person name="Futaki S."/>
            <person name="Gariboldi M."/>
            <person name="Georgii-Hemming P."/>
            <person name="Gingeras T.R."/>
            <person name="Gojobori T."/>
            <person name="Green R.E."/>
            <person name="Gustincich S."/>
            <person name="Harbers M."/>
            <person name="Hayashi Y."/>
            <person name="Hensch T.K."/>
            <person name="Hirokawa N."/>
            <person name="Hill D."/>
            <person name="Huminiecki L."/>
            <person name="Iacono M."/>
            <person name="Ikeo K."/>
            <person name="Iwama A."/>
            <person name="Ishikawa T."/>
            <person name="Jakt M."/>
            <person name="Kanapin A."/>
            <person name="Katoh M."/>
            <person name="Kawasawa Y."/>
            <person name="Kelso J."/>
            <person name="Kitamura H."/>
            <person name="Kitano H."/>
            <person name="Kollias G."/>
            <person name="Krishnan S.P."/>
            <person name="Kruger A."/>
            <person name="Kummerfeld S.K."/>
            <person name="Kurochkin I.V."/>
            <person name="Lareau L.F."/>
            <person name="Lazarevic D."/>
            <person name="Lipovich L."/>
            <person name="Liu J."/>
            <person name="Liuni S."/>
            <person name="McWilliam S."/>
            <person name="Madan Babu M."/>
            <person name="Madera M."/>
            <person name="Marchionni L."/>
            <person name="Matsuda H."/>
            <person name="Matsuzawa S."/>
            <person name="Miki H."/>
            <person name="Mignone F."/>
            <person name="Miyake S."/>
            <person name="Morris K."/>
            <person name="Mottagui-Tabar S."/>
            <person name="Mulder N."/>
            <person name="Nakano N."/>
            <person name="Nakauchi H."/>
            <person name="Ng P."/>
            <person name="Nilsson R."/>
            <person name="Nishiguchi S."/>
            <person name="Nishikawa S."/>
            <person name="Nori F."/>
            <person name="Ohara O."/>
            <person name="Okazaki Y."/>
            <person name="Orlando V."/>
            <person name="Pang K.C."/>
            <person name="Pavan W.J."/>
            <person name="Pavesi G."/>
            <person name="Pesole G."/>
            <person name="Petrovsky N."/>
            <person name="Piazza S."/>
            <person name="Reed J."/>
            <person name="Reid J.F."/>
            <person name="Ring B.Z."/>
            <person name="Ringwald M."/>
            <person name="Rost B."/>
            <person name="Ruan Y."/>
            <person name="Salzberg S.L."/>
            <person name="Sandelin A."/>
            <person name="Schneider C."/>
            <person name="Schoenbach C."/>
            <person name="Sekiguchi K."/>
            <person name="Semple C.A."/>
            <person name="Seno S."/>
            <person name="Sessa L."/>
            <person name="Sheng Y."/>
            <person name="Shibata Y."/>
            <person name="Shimada H."/>
            <person name="Shimada K."/>
            <person name="Silva D."/>
            <person name="Sinclair B."/>
            <person name="Sperling S."/>
            <person name="Stupka E."/>
            <person name="Sugiura K."/>
            <person name="Sultana R."/>
            <person name="Takenaka Y."/>
            <person name="Taki K."/>
            <person name="Tammoja K."/>
            <person name="Tan S.L."/>
            <person name="Tang S."/>
            <person name="Taylor M.S."/>
            <person name="Tegner J."/>
            <person name="Teichmann S.A."/>
            <person name="Ueda H.R."/>
            <person name="van Nimwegen E."/>
            <person name="Verardo R."/>
            <person name="Wei C.L."/>
            <person name="Yagi K."/>
            <person name="Yamanishi H."/>
            <person name="Zabarovsky E."/>
            <person name="Zhu S."/>
            <person name="Zimmer A."/>
            <person name="Hide W."/>
            <person name="Bult C."/>
            <person name="Grimmond S.M."/>
            <person name="Teasdale R.D."/>
            <person name="Liu E.T."/>
            <person name="Brusic V."/>
            <person name="Quackenbush J."/>
            <person name="Wahlestedt C."/>
            <person name="Mattick J.S."/>
            <person name="Hume D.A."/>
            <person name="Kai C."/>
            <person name="Sasaki D."/>
            <person name="Tomaru Y."/>
            <person name="Fukuda S."/>
            <person name="Kanamori-Katayama M."/>
            <person name="Suzuki M."/>
            <person name="Aoki J."/>
            <person name="Arakawa T."/>
            <person name="Iida J."/>
            <person name="Imamura K."/>
            <person name="Itoh M."/>
            <person name="Kato T."/>
            <person name="Kawaji H."/>
            <person name="Kawagashira N."/>
            <person name="Kawashima T."/>
            <person name="Kojima M."/>
            <person name="Kondo S."/>
            <person name="Konno H."/>
            <person name="Nakano K."/>
            <person name="Ninomiya N."/>
            <person name="Nishio T."/>
            <person name="Okada M."/>
            <person name="Plessy C."/>
            <person name="Shibata K."/>
            <person name="Shiraki T."/>
            <person name="Suzuki S."/>
            <person name="Tagami M."/>
            <person name="Waki K."/>
            <person name="Watahiki A."/>
            <person name="Okamura-Oho Y."/>
            <person name="Suzuki H."/>
            <person name="Kawai J."/>
            <person name="Hayashizaki Y."/>
        </authorList>
    </citation>
    <scope>NUCLEOTIDE SEQUENCE [LARGE SCALE MRNA]</scope>
    <source>
        <strain>C57BL/6J</strain>
        <tissue>Bone marrow</tissue>
        <tissue>Pancreas</tissue>
    </source>
</reference>
<reference key="4">
    <citation type="journal article" date="2004" name="Genome Res.">
        <title>The status, quality, and expansion of the NIH full-length cDNA project: the Mammalian Gene Collection (MGC).</title>
        <authorList>
            <consortium name="The MGC Project Team"/>
        </authorList>
    </citation>
    <scope>NUCLEOTIDE SEQUENCE [LARGE SCALE MRNA]</scope>
    <source>
        <strain>FVB/N</strain>
        <tissue>Mammary tumor</tissue>
    </source>
</reference>
<reference key="5">
    <citation type="submission" date="2007-04" db="UniProtKB">
        <authorList>
            <person name="Lubec G."/>
            <person name="Kang S.U."/>
        </authorList>
    </citation>
    <scope>PROTEIN SEQUENCE OF 38-111; 120-137; 148-155; 200-231; 275-281; 310-326 AND 374-382</scope>
    <scope>IDENTIFICATION BY MASS SPECTROMETRY</scope>
    <source>
        <strain>C57BL/6J</strain>
        <tissue>Brain</tissue>
    </source>
</reference>
<reference key="6">
    <citation type="journal article" date="2010" name="Cell">
        <title>A tissue-specific atlas of mouse protein phosphorylation and expression.</title>
        <authorList>
            <person name="Huttlin E.L."/>
            <person name="Jedrychowski M.P."/>
            <person name="Elias J.E."/>
            <person name="Goswami T."/>
            <person name="Rad R."/>
            <person name="Beausoleil S.A."/>
            <person name="Villen J."/>
            <person name="Haas W."/>
            <person name="Sowa M.E."/>
            <person name="Gygi S.P."/>
        </authorList>
    </citation>
    <scope>IDENTIFICATION BY MASS SPECTROMETRY [LARGE SCALE ANALYSIS]</scope>
    <source>
        <tissue>Brain</tissue>
        <tissue>Brown adipose tissue</tissue>
        <tissue>Heart</tissue>
        <tissue>Kidney</tissue>
        <tissue>Liver</tissue>
        <tissue>Lung</tissue>
        <tissue>Pancreas</tissue>
        <tissue>Spleen</tissue>
        <tissue>Testis</tissue>
    </source>
</reference>
<proteinExistence type="evidence at protein level"/>
<accession>Q9Z1G3</accession>
<accession>Q91Z42</accession>
<name>VATC1_MOUSE</name>
<evidence type="ECO:0000250" key="1">
    <source>
        <dbReference type="UniProtKB" id="P21282"/>
    </source>
</evidence>
<evidence type="ECO:0000250" key="2">
    <source>
        <dbReference type="UniProtKB" id="P21283"/>
    </source>
</evidence>
<evidence type="ECO:0000250" key="3">
    <source>
        <dbReference type="UniProtKB" id="P31412"/>
    </source>
</evidence>
<evidence type="ECO:0000250" key="4">
    <source>
        <dbReference type="UniProtKB" id="Q5FVI6"/>
    </source>
</evidence>
<evidence type="ECO:0000269" key="5">
    <source>
    </source>
</evidence>
<evidence type="ECO:0000305" key="6"/>
<gene>
    <name type="primary">Atp6v1c1</name>
    <name type="synonym">Atp6c</name>
    <name type="synonym">Atp6c1</name>
    <name type="synonym">Vatc</name>
</gene>
<organism>
    <name type="scientific">Mus musculus</name>
    <name type="common">Mouse</name>
    <dbReference type="NCBI Taxonomy" id="10090"/>
    <lineage>
        <taxon>Eukaryota</taxon>
        <taxon>Metazoa</taxon>
        <taxon>Chordata</taxon>
        <taxon>Craniata</taxon>
        <taxon>Vertebrata</taxon>
        <taxon>Euteleostomi</taxon>
        <taxon>Mammalia</taxon>
        <taxon>Eutheria</taxon>
        <taxon>Euarchontoglires</taxon>
        <taxon>Glires</taxon>
        <taxon>Rodentia</taxon>
        <taxon>Myomorpha</taxon>
        <taxon>Muroidea</taxon>
        <taxon>Muridae</taxon>
        <taxon>Murinae</taxon>
        <taxon>Mus</taxon>
        <taxon>Mus</taxon>
    </lineage>
</organism>
<protein>
    <recommendedName>
        <fullName>V-type proton ATPase subunit C 1</fullName>
        <shortName>V-ATPase subunit C 1</shortName>
    </recommendedName>
    <alternativeName>
        <fullName>Vacuolar proton pump subunit C 1</fullName>
    </alternativeName>
</protein>
<dbReference type="EMBL" id="AB088407">
    <property type="protein sequence ID" value="BAC57953.1"/>
    <property type="molecule type" value="mRNA"/>
</dbReference>
<dbReference type="EMBL" id="U13839">
    <property type="protein sequence ID" value="AAC83084.1"/>
    <property type="molecule type" value="mRNA"/>
</dbReference>
<dbReference type="EMBL" id="AK075779">
    <property type="protein sequence ID" value="BAC35953.1"/>
    <property type="molecule type" value="mRNA"/>
</dbReference>
<dbReference type="EMBL" id="AK151237">
    <property type="protein sequence ID" value="BAE30229.1"/>
    <property type="molecule type" value="mRNA"/>
</dbReference>
<dbReference type="EMBL" id="BC010217">
    <property type="protein sequence ID" value="AAH10217.1"/>
    <property type="molecule type" value="mRNA"/>
</dbReference>
<dbReference type="CCDS" id="CCDS27439.1"/>
<dbReference type="RefSeq" id="NP_079770.2">
    <property type="nucleotide sequence ID" value="NM_025494.3"/>
</dbReference>
<dbReference type="PDB" id="9BRA">
    <property type="method" value="EM"/>
    <property type="resolution" value="4.30 A"/>
    <property type="chains" value="6=1-382"/>
</dbReference>
<dbReference type="PDB" id="9BRQ">
    <property type="method" value="EM"/>
    <property type="resolution" value="4.30 A"/>
    <property type="chains" value="6=1-382"/>
</dbReference>
<dbReference type="PDB" id="9BRR">
    <property type="method" value="EM"/>
    <property type="resolution" value="4.50 A"/>
    <property type="chains" value="6=1-382"/>
</dbReference>
<dbReference type="PDB" id="9BRS">
    <property type="method" value="EM"/>
    <property type="resolution" value="4.40 A"/>
    <property type="chains" value="6=1-382"/>
</dbReference>
<dbReference type="PDB" id="9BRT">
    <property type="method" value="EM"/>
    <property type="resolution" value="4.30 A"/>
    <property type="chains" value="6=1-382"/>
</dbReference>
<dbReference type="PDB" id="9BRU">
    <property type="method" value="EM"/>
    <property type="resolution" value="4.40 A"/>
    <property type="chains" value="6=1-382"/>
</dbReference>
<dbReference type="PDBsum" id="9BRA"/>
<dbReference type="PDBsum" id="9BRQ"/>
<dbReference type="PDBsum" id="9BRR"/>
<dbReference type="PDBsum" id="9BRS"/>
<dbReference type="PDBsum" id="9BRT"/>
<dbReference type="PDBsum" id="9BRU"/>
<dbReference type="EMDB" id="EMD-44839"/>
<dbReference type="EMDB" id="EMD-44840"/>
<dbReference type="EMDB" id="EMD-44841"/>
<dbReference type="EMDB" id="EMD-44842"/>
<dbReference type="EMDB" id="EMD-44843"/>
<dbReference type="EMDB" id="EMD-44844"/>
<dbReference type="SMR" id="Q9Z1G3"/>
<dbReference type="BioGRID" id="211393">
    <property type="interactions" value="24"/>
</dbReference>
<dbReference type="FunCoup" id="Q9Z1G3">
    <property type="interactions" value="2517"/>
</dbReference>
<dbReference type="IntAct" id="Q9Z1G3">
    <property type="interactions" value="5"/>
</dbReference>
<dbReference type="MINT" id="Q9Z1G3"/>
<dbReference type="STRING" id="10090.ENSMUSP00000022904"/>
<dbReference type="TCDB" id="3.A.2.2.6">
    <property type="family name" value="the h+- or na+-translocating f-type, v-type and a-type atpase (f-atpase) superfamily"/>
</dbReference>
<dbReference type="GlyGen" id="Q9Z1G3">
    <property type="glycosylation" value="3 sites, 2 N-linked glycans (2 sites), 1 O-linked glycan (1 site)"/>
</dbReference>
<dbReference type="iPTMnet" id="Q9Z1G3"/>
<dbReference type="PhosphoSitePlus" id="Q9Z1G3"/>
<dbReference type="SwissPalm" id="Q9Z1G3"/>
<dbReference type="jPOST" id="Q9Z1G3"/>
<dbReference type="PaxDb" id="10090-ENSMUSP00000022904"/>
<dbReference type="PeptideAtlas" id="Q9Z1G3"/>
<dbReference type="ProteomicsDB" id="297958"/>
<dbReference type="Pumba" id="Q9Z1G3"/>
<dbReference type="Antibodypedia" id="4022">
    <property type="antibodies" value="128 antibodies from 24 providers"/>
</dbReference>
<dbReference type="DNASU" id="66335"/>
<dbReference type="Ensembl" id="ENSMUST00000022904.8">
    <property type="protein sequence ID" value="ENSMUSP00000022904.7"/>
    <property type="gene ID" value="ENSMUSG00000022295.9"/>
</dbReference>
<dbReference type="GeneID" id="66335"/>
<dbReference type="KEGG" id="mmu:66335"/>
<dbReference type="UCSC" id="uc007vnv.2">
    <property type="organism name" value="mouse"/>
</dbReference>
<dbReference type="AGR" id="MGI:1913585"/>
<dbReference type="CTD" id="528"/>
<dbReference type="MGI" id="MGI:1913585">
    <property type="gene designation" value="Atp6v1c1"/>
</dbReference>
<dbReference type="VEuPathDB" id="HostDB:ENSMUSG00000022295"/>
<dbReference type="eggNOG" id="KOG2909">
    <property type="taxonomic scope" value="Eukaryota"/>
</dbReference>
<dbReference type="GeneTree" id="ENSGT00390000004263"/>
<dbReference type="HOGENOM" id="CLU_017554_3_0_1"/>
<dbReference type="InParanoid" id="Q9Z1G3"/>
<dbReference type="OMA" id="VMIWIHV"/>
<dbReference type="OrthoDB" id="6605928at2759"/>
<dbReference type="PhylomeDB" id="Q9Z1G3"/>
<dbReference type="TreeFam" id="TF314912"/>
<dbReference type="Reactome" id="R-MMU-1222556">
    <property type="pathway name" value="ROS and RNS production in phagocytes"/>
</dbReference>
<dbReference type="Reactome" id="R-MMU-77387">
    <property type="pathway name" value="Insulin receptor recycling"/>
</dbReference>
<dbReference type="Reactome" id="R-MMU-917977">
    <property type="pathway name" value="Transferrin endocytosis and recycling"/>
</dbReference>
<dbReference type="Reactome" id="R-MMU-9639288">
    <property type="pathway name" value="Amino acids regulate mTORC1"/>
</dbReference>
<dbReference type="Reactome" id="R-MMU-983712">
    <property type="pathway name" value="Ion channel transport"/>
</dbReference>
<dbReference type="BioGRID-ORCS" id="66335">
    <property type="hits" value="23 hits in 79 CRISPR screens"/>
</dbReference>
<dbReference type="CD-CODE" id="CE726F99">
    <property type="entry name" value="Postsynaptic density"/>
</dbReference>
<dbReference type="ChiTaRS" id="Atp6v1c1">
    <property type="organism name" value="mouse"/>
</dbReference>
<dbReference type="PRO" id="PR:Q9Z1G3"/>
<dbReference type="Proteomes" id="UP000000589">
    <property type="component" value="Chromosome 15"/>
</dbReference>
<dbReference type="RNAct" id="Q9Z1G3">
    <property type="molecule type" value="protein"/>
</dbReference>
<dbReference type="Bgee" id="ENSMUSG00000022295">
    <property type="expression patterns" value="Expressed in Ammon's horn and 90 other cell types or tissues"/>
</dbReference>
<dbReference type="ExpressionAtlas" id="Q9Z1G3">
    <property type="expression patterns" value="baseline and differential"/>
</dbReference>
<dbReference type="GO" id="GO:0045177">
    <property type="term" value="C:apical part of cell"/>
    <property type="evidence" value="ECO:0007669"/>
    <property type="project" value="Ensembl"/>
</dbReference>
<dbReference type="GO" id="GO:1904949">
    <property type="term" value="C:ATPase complex"/>
    <property type="evidence" value="ECO:0000314"/>
    <property type="project" value="MGI"/>
</dbReference>
<dbReference type="GO" id="GO:0030665">
    <property type="term" value="C:clathrin-coated vesicle membrane"/>
    <property type="evidence" value="ECO:0007669"/>
    <property type="project" value="UniProtKB-SubCell"/>
</dbReference>
<dbReference type="GO" id="GO:0098850">
    <property type="term" value="C:extrinsic component of synaptic vesicle membrane"/>
    <property type="evidence" value="ECO:0007669"/>
    <property type="project" value="Ensembl"/>
</dbReference>
<dbReference type="GO" id="GO:0005886">
    <property type="term" value="C:plasma membrane"/>
    <property type="evidence" value="ECO:0000314"/>
    <property type="project" value="UniProtKB"/>
</dbReference>
<dbReference type="GO" id="GO:0033176">
    <property type="term" value="C:proton-transporting V-type ATPase complex"/>
    <property type="evidence" value="ECO:0000314"/>
    <property type="project" value="MGI"/>
</dbReference>
<dbReference type="GO" id="GO:0033180">
    <property type="term" value="C:proton-transporting V-type ATPase, V1 domain"/>
    <property type="evidence" value="ECO:0000314"/>
    <property type="project" value="MGI"/>
</dbReference>
<dbReference type="GO" id="GO:0000221">
    <property type="term" value="C:vacuolar proton-transporting V-type ATPase, V1 domain"/>
    <property type="evidence" value="ECO:0000250"/>
    <property type="project" value="UniProtKB"/>
</dbReference>
<dbReference type="GO" id="GO:0046961">
    <property type="term" value="F:proton-transporting ATPase activity, rotational mechanism"/>
    <property type="evidence" value="ECO:0000314"/>
    <property type="project" value="MGI"/>
</dbReference>
<dbReference type="GO" id="GO:0097401">
    <property type="term" value="P:synaptic vesicle lumen acidification"/>
    <property type="evidence" value="ECO:0000314"/>
    <property type="project" value="SynGO"/>
</dbReference>
<dbReference type="CDD" id="cd14785">
    <property type="entry name" value="V-ATPase_C"/>
    <property type="match status" value="1"/>
</dbReference>
<dbReference type="FunFam" id="1.20.1460.10:FF:000004">
    <property type="entry name" value="V-type proton ATPase subunit C"/>
    <property type="match status" value="1"/>
</dbReference>
<dbReference type="FunFam" id="3.30.70.100:FF:000002">
    <property type="entry name" value="V-type proton ATPase subunit C"/>
    <property type="match status" value="1"/>
</dbReference>
<dbReference type="FunFam" id="3.30.70.1180:FF:000003">
    <property type="entry name" value="V-type proton ATPase subunit C"/>
    <property type="match status" value="1"/>
</dbReference>
<dbReference type="Gene3D" id="3.30.70.100">
    <property type="match status" value="1"/>
</dbReference>
<dbReference type="Gene3D" id="1.20.1460.10">
    <property type="entry name" value="subunit c (vma5p) of the yeast v-atpase, domain 2"/>
    <property type="match status" value="1"/>
</dbReference>
<dbReference type="Gene3D" id="3.30.70.1180">
    <property type="entry name" value="Vacuolar atp synthase subunit c, domain 1"/>
    <property type="match status" value="1"/>
</dbReference>
<dbReference type="InterPro" id="IPR004907">
    <property type="entry name" value="ATPase_V1-cplx_csu"/>
</dbReference>
<dbReference type="InterPro" id="IPR036132">
    <property type="entry name" value="Vac_ATP_synth_c_sf"/>
</dbReference>
<dbReference type="PANTHER" id="PTHR10137">
    <property type="entry name" value="V-TYPE PROTON ATPASE SUBUNIT C"/>
    <property type="match status" value="1"/>
</dbReference>
<dbReference type="PANTHER" id="PTHR10137:SF5">
    <property type="entry name" value="V-TYPE PROTON ATPASE SUBUNIT C 1"/>
    <property type="match status" value="1"/>
</dbReference>
<dbReference type="Pfam" id="PF03223">
    <property type="entry name" value="V-ATPase_C"/>
    <property type="match status" value="1"/>
</dbReference>
<dbReference type="SUPFAM" id="SSF118203">
    <property type="entry name" value="Vacuolar ATP synthase subunit C"/>
    <property type="match status" value="1"/>
</dbReference>
<keyword id="KW-0002">3D-structure</keyword>
<keyword id="KW-0007">Acetylation</keyword>
<keyword id="KW-0968">Cytoplasmic vesicle</keyword>
<keyword id="KW-0903">Direct protein sequencing</keyword>
<keyword id="KW-0375">Hydrogen ion transport</keyword>
<keyword id="KW-0406">Ion transport</keyword>
<keyword id="KW-0472">Membrane</keyword>
<keyword id="KW-1185">Reference proteome</keyword>
<keyword id="KW-0770">Synapse</keyword>
<keyword id="KW-0813">Transport</keyword>